<gene>
    <name evidence="2" type="primary">folE</name>
    <name type="ordered locus">ASA_2752</name>
</gene>
<organism>
    <name type="scientific">Aeromonas salmonicida (strain A449)</name>
    <dbReference type="NCBI Taxonomy" id="382245"/>
    <lineage>
        <taxon>Bacteria</taxon>
        <taxon>Pseudomonadati</taxon>
        <taxon>Pseudomonadota</taxon>
        <taxon>Gammaproteobacteria</taxon>
        <taxon>Aeromonadales</taxon>
        <taxon>Aeromonadaceae</taxon>
        <taxon>Aeromonas</taxon>
    </lineage>
</organism>
<name>GCH1_AERS4</name>
<feature type="chain" id="PRO_1000043655" description="GTP cyclohydrolase 1">
    <location>
        <begin position="1"/>
        <end position="218"/>
    </location>
</feature>
<feature type="binding site" evidence="2">
    <location>
        <position position="109"/>
    </location>
    <ligand>
        <name>Zn(2+)</name>
        <dbReference type="ChEBI" id="CHEBI:29105"/>
    </ligand>
</feature>
<feature type="binding site" evidence="2">
    <location>
        <position position="112"/>
    </location>
    <ligand>
        <name>Zn(2+)</name>
        <dbReference type="ChEBI" id="CHEBI:29105"/>
    </ligand>
</feature>
<feature type="binding site" evidence="2">
    <location>
        <position position="180"/>
    </location>
    <ligand>
        <name>Zn(2+)</name>
        <dbReference type="ChEBI" id="CHEBI:29105"/>
    </ligand>
</feature>
<keyword id="KW-0342">GTP-binding</keyword>
<keyword id="KW-0378">Hydrolase</keyword>
<keyword id="KW-0479">Metal-binding</keyword>
<keyword id="KW-0547">Nucleotide-binding</keyword>
<keyword id="KW-0554">One-carbon metabolism</keyword>
<keyword id="KW-0862">Zinc</keyword>
<protein>
    <recommendedName>
        <fullName evidence="2">GTP cyclohydrolase 1</fullName>
        <ecNumber evidence="2">3.5.4.16</ecNumber>
    </recommendedName>
    <alternativeName>
        <fullName evidence="2">GTP cyclohydrolase I</fullName>
        <shortName evidence="2">GTP-CH-I</shortName>
    </alternativeName>
</protein>
<dbReference type="EC" id="3.5.4.16" evidence="2"/>
<dbReference type="EMBL" id="CP000644">
    <property type="protein sequence ID" value="ABO90770.1"/>
    <property type="molecule type" value="Genomic_DNA"/>
</dbReference>
<dbReference type="RefSeq" id="WP_005309931.1">
    <property type="nucleotide sequence ID" value="NC_009348.1"/>
</dbReference>
<dbReference type="SMR" id="A4SPE8"/>
<dbReference type="STRING" id="29491.GCA_000820065_00060"/>
<dbReference type="KEGG" id="asa:ASA_2752"/>
<dbReference type="eggNOG" id="COG0302">
    <property type="taxonomic scope" value="Bacteria"/>
</dbReference>
<dbReference type="HOGENOM" id="CLU_049768_3_2_6"/>
<dbReference type="UniPathway" id="UPA00848">
    <property type="reaction ID" value="UER00151"/>
</dbReference>
<dbReference type="Proteomes" id="UP000000225">
    <property type="component" value="Chromosome"/>
</dbReference>
<dbReference type="GO" id="GO:0005737">
    <property type="term" value="C:cytoplasm"/>
    <property type="evidence" value="ECO:0007669"/>
    <property type="project" value="TreeGrafter"/>
</dbReference>
<dbReference type="GO" id="GO:0005525">
    <property type="term" value="F:GTP binding"/>
    <property type="evidence" value="ECO:0007669"/>
    <property type="project" value="UniProtKB-KW"/>
</dbReference>
<dbReference type="GO" id="GO:0003934">
    <property type="term" value="F:GTP cyclohydrolase I activity"/>
    <property type="evidence" value="ECO:0007669"/>
    <property type="project" value="UniProtKB-UniRule"/>
</dbReference>
<dbReference type="GO" id="GO:0008270">
    <property type="term" value="F:zinc ion binding"/>
    <property type="evidence" value="ECO:0007669"/>
    <property type="project" value="UniProtKB-UniRule"/>
</dbReference>
<dbReference type="GO" id="GO:0006730">
    <property type="term" value="P:one-carbon metabolic process"/>
    <property type="evidence" value="ECO:0007669"/>
    <property type="project" value="UniProtKB-UniRule"/>
</dbReference>
<dbReference type="GO" id="GO:0006729">
    <property type="term" value="P:tetrahydrobiopterin biosynthetic process"/>
    <property type="evidence" value="ECO:0007669"/>
    <property type="project" value="TreeGrafter"/>
</dbReference>
<dbReference type="GO" id="GO:0046654">
    <property type="term" value="P:tetrahydrofolate biosynthetic process"/>
    <property type="evidence" value="ECO:0007669"/>
    <property type="project" value="UniProtKB-UniRule"/>
</dbReference>
<dbReference type="FunFam" id="3.30.1130.10:FF:000001">
    <property type="entry name" value="GTP cyclohydrolase 1"/>
    <property type="match status" value="1"/>
</dbReference>
<dbReference type="Gene3D" id="1.10.286.10">
    <property type="match status" value="1"/>
</dbReference>
<dbReference type="Gene3D" id="3.30.1130.10">
    <property type="match status" value="1"/>
</dbReference>
<dbReference type="HAMAP" id="MF_00223">
    <property type="entry name" value="FolE"/>
    <property type="match status" value="1"/>
</dbReference>
<dbReference type="InterPro" id="IPR043133">
    <property type="entry name" value="GTP-CH-I_C/QueF"/>
</dbReference>
<dbReference type="InterPro" id="IPR043134">
    <property type="entry name" value="GTP-CH-I_N"/>
</dbReference>
<dbReference type="InterPro" id="IPR001474">
    <property type="entry name" value="GTP_CycHdrlase_I"/>
</dbReference>
<dbReference type="InterPro" id="IPR018234">
    <property type="entry name" value="GTP_CycHdrlase_I_CS"/>
</dbReference>
<dbReference type="InterPro" id="IPR020602">
    <property type="entry name" value="GTP_CycHdrlase_I_dom"/>
</dbReference>
<dbReference type="NCBIfam" id="TIGR00063">
    <property type="entry name" value="folE"/>
    <property type="match status" value="1"/>
</dbReference>
<dbReference type="NCBIfam" id="NF006824">
    <property type="entry name" value="PRK09347.1-1"/>
    <property type="match status" value="1"/>
</dbReference>
<dbReference type="NCBIfam" id="NF006825">
    <property type="entry name" value="PRK09347.1-2"/>
    <property type="match status" value="1"/>
</dbReference>
<dbReference type="NCBIfam" id="NF006826">
    <property type="entry name" value="PRK09347.1-3"/>
    <property type="match status" value="1"/>
</dbReference>
<dbReference type="PANTHER" id="PTHR11109:SF7">
    <property type="entry name" value="GTP CYCLOHYDROLASE 1"/>
    <property type="match status" value="1"/>
</dbReference>
<dbReference type="PANTHER" id="PTHR11109">
    <property type="entry name" value="GTP CYCLOHYDROLASE I"/>
    <property type="match status" value="1"/>
</dbReference>
<dbReference type="Pfam" id="PF01227">
    <property type="entry name" value="GTP_cyclohydroI"/>
    <property type="match status" value="1"/>
</dbReference>
<dbReference type="SUPFAM" id="SSF55620">
    <property type="entry name" value="Tetrahydrobiopterin biosynthesis enzymes-like"/>
    <property type="match status" value="1"/>
</dbReference>
<dbReference type="PROSITE" id="PS00859">
    <property type="entry name" value="GTP_CYCLOHYDROL_1_1"/>
    <property type="match status" value="1"/>
</dbReference>
<dbReference type="PROSITE" id="PS00860">
    <property type="entry name" value="GTP_CYCLOHYDROL_1_2"/>
    <property type="match status" value="1"/>
</dbReference>
<sequence>MTSLSQEALLVRAALEAEGLETPLVANALNGQQKKEKIEGHMRAIMETLGLDLTDDSLAETPHRIAKMYVNEIFSGLDYSTFPKVTVIENKMKVDEMIMVRDISLTSTCEHHFVTIDGLAHVAYIPRGKVIGLSKINRIVQFFARRPQVQERLTQQILLALQTLLGTKDVAISIKATHFCVKARGVMDSTSYTTTTSLGGVFKTQPDTRAEFLGGLKG</sequence>
<proteinExistence type="inferred from homology"/>
<accession>A4SPE8</accession>
<reference key="1">
    <citation type="journal article" date="2008" name="BMC Genomics">
        <title>The genome of Aeromonas salmonicida subsp. salmonicida A449: insights into the evolution of a fish pathogen.</title>
        <authorList>
            <person name="Reith M.E."/>
            <person name="Singh R.K."/>
            <person name="Curtis B."/>
            <person name="Boyd J.M."/>
            <person name="Bouevitch A."/>
            <person name="Kimball J."/>
            <person name="Munholland J."/>
            <person name="Murphy C."/>
            <person name="Sarty D."/>
            <person name="Williams J."/>
            <person name="Nash J.H."/>
            <person name="Johnson S.C."/>
            <person name="Brown L.L."/>
        </authorList>
    </citation>
    <scope>NUCLEOTIDE SEQUENCE [LARGE SCALE GENOMIC DNA]</scope>
    <source>
        <strain>A449</strain>
    </source>
</reference>
<evidence type="ECO:0000250" key="1"/>
<evidence type="ECO:0000255" key="2">
    <source>
        <dbReference type="HAMAP-Rule" id="MF_00223"/>
    </source>
</evidence>
<comment type="catalytic activity">
    <reaction evidence="2">
        <text>GTP + H2O = 7,8-dihydroneopterin 3'-triphosphate + formate + H(+)</text>
        <dbReference type="Rhea" id="RHEA:17473"/>
        <dbReference type="ChEBI" id="CHEBI:15377"/>
        <dbReference type="ChEBI" id="CHEBI:15378"/>
        <dbReference type="ChEBI" id="CHEBI:15740"/>
        <dbReference type="ChEBI" id="CHEBI:37565"/>
        <dbReference type="ChEBI" id="CHEBI:58462"/>
        <dbReference type="EC" id="3.5.4.16"/>
    </reaction>
</comment>
<comment type="pathway">
    <text evidence="2">Cofactor biosynthesis; 7,8-dihydroneopterin triphosphate biosynthesis; 7,8-dihydroneopterin triphosphate from GTP: step 1/1.</text>
</comment>
<comment type="subunit">
    <text evidence="1">Toroid-shaped homodecamer, composed of two pentamers of five dimers.</text>
</comment>
<comment type="similarity">
    <text evidence="2">Belongs to the GTP cyclohydrolase I family.</text>
</comment>